<dbReference type="EC" id="2.5.1.75" evidence="1"/>
<dbReference type="EMBL" id="CP000570">
    <property type="protein sequence ID" value="ABN83697.1"/>
    <property type="molecule type" value="Genomic_DNA"/>
</dbReference>
<dbReference type="RefSeq" id="WP_011852150.1">
    <property type="nucleotide sequence ID" value="NC_009074.1"/>
</dbReference>
<dbReference type="SMR" id="A3ND55"/>
<dbReference type="KEGG" id="bpd:BURPS668_3265"/>
<dbReference type="HOGENOM" id="CLU_032616_0_0_4"/>
<dbReference type="GO" id="GO:0005524">
    <property type="term" value="F:ATP binding"/>
    <property type="evidence" value="ECO:0007669"/>
    <property type="project" value="UniProtKB-UniRule"/>
</dbReference>
<dbReference type="GO" id="GO:0052381">
    <property type="term" value="F:tRNA dimethylallyltransferase activity"/>
    <property type="evidence" value="ECO:0007669"/>
    <property type="project" value="UniProtKB-UniRule"/>
</dbReference>
<dbReference type="GO" id="GO:0006400">
    <property type="term" value="P:tRNA modification"/>
    <property type="evidence" value="ECO:0007669"/>
    <property type="project" value="TreeGrafter"/>
</dbReference>
<dbReference type="FunFam" id="1.10.20.140:FF:000001">
    <property type="entry name" value="tRNA dimethylallyltransferase"/>
    <property type="match status" value="1"/>
</dbReference>
<dbReference type="Gene3D" id="1.10.20.140">
    <property type="match status" value="1"/>
</dbReference>
<dbReference type="Gene3D" id="3.40.50.300">
    <property type="entry name" value="P-loop containing nucleotide triphosphate hydrolases"/>
    <property type="match status" value="1"/>
</dbReference>
<dbReference type="HAMAP" id="MF_00185">
    <property type="entry name" value="IPP_trans"/>
    <property type="match status" value="1"/>
</dbReference>
<dbReference type="InterPro" id="IPR039657">
    <property type="entry name" value="Dimethylallyltransferase"/>
</dbReference>
<dbReference type="InterPro" id="IPR018022">
    <property type="entry name" value="IPT"/>
</dbReference>
<dbReference type="InterPro" id="IPR027417">
    <property type="entry name" value="P-loop_NTPase"/>
</dbReference>
<dbReference type="NCBIfam" id="TIGR00174">
    <property type="entry name" value="miaA"/>
    <property type="match status" value="1"/>
</dbReference>
<dbReference type="PANTHER" id="PTHR11088">
    <property type="entry name" value="TRNA DIMETHYLALLYLTRANSFERASE"/>
    <property type="match status" value="1"/>
</dbReference>
<dbReference type="PANTHER" id="PTHR11088:SF60">
    <property type="entry name" value="TRNA DIMETHYLALLYLTRANSFERASE"/>
    <property type="match status" value="1"/>
</dbReference>
<dbReference type="Pfam" id="PF01715">
    <property type="entry name" value="IPPT"/>
    <property type="match status" value="1"/>
</dbReference>
<dbReference type="SUPFAM" id="SSF52540">
    <property type="entry name" value="P-loop containing nucleoside triphosphate hydrolases"/>
    <property type="match status" value="2"/>
</dbReference>
<evidence type="ECO:0000255" key="1">
    <source>
        <dbReference type="HAMAP-Rule" id="MF_00185"/>
    </source>
</evidence>
<keyword id="KW-0067">ATP-binding</keyword>
<keyword id="KW-0460">Magnesium</keyword>
<keyword id="KW-0547">Nucleotide-binding</keyword>
<keyword id="KW-0808">Transferase</keyword>
<keyword id="KW-0819">tRNA processing</keyword>
<comment type="function">
    <text evidence="1">Catalyzes the transfer of a dimethylallyl group onto the adenine at position 37 in tRNAs that read codons beginning with uridine, leading to the formation of N6-(dimethylallyl)adenosine (i(6)A).</text>
</comment>
<comment type="catalytic activity">
    <reaction evidence="1">
        <text>adenosine(37) in tRNA + dimethylallyl diphosphate = N(6)-dimethylallyladenosine(37) in tRNA + diphosphate</text>
        <dbReference type="Rhea" id="RHEA:26482"/>
        <dbReference type="Rhea" id="RHEA-COMP:10162"/>
        <dbReference type="Rhea" id="RHEA-COMP:10375"/>
        <dbReference type="ChEBI" id="CHEBI:33019"/>
        <dbReference type="ChEBI" id="CHEBI:57623"/>
        <dbReference type="ChEBI" id="CHEBI:74411"/>
        <dbReference type="ChEBI" id="CHEBI:74415"/>
        <dbReference type="EC" id="2.5.1.75"/>
    </reaction>
</comment>
<comment type="cofactor">
    <cofactor evidence="1">
        <name>Mg(2+)</name>
        <dbReference type="ChEBI" id="CHEBI:18420"/>
    </cofactor>
</comment>
<comment type="subunit">
    <text evidence="1">Monomer.</text>
</comment>
<comment type="similarity">
    <text evidence="1">Belongs to the IPP transferase family.</text>
</comment>
<proteinExistence type="inferred from homology"/>
<organism>
    <name type="scientific">Burkholderia pseudomallei (strain 668)</name>
    <dbReference type="NCBI Taxonomy" id="320373"/>
    <lineage>
        <taxon>Bacteria</taxon>
        <taxon>Pseudomonadati</taxon>
        <taxon>Pseudomonadota</taxon>
        <taxon>Betaproteobacteria</taxon>
        <taxon>Burkholderiales</taxon>
        <taxon>Burkholderiaceae</taxon>
        <taxon>Burkholderia</taxon>
        <taxon>pseudomallei group</taxon>
    </lineage>
</organism>
<reference key="1">
    <citation type="journal article" date="2010" name="Genome Biol. Evol.">
        <title>Continuing evolution of Burkholderia mallei through genome reduction and large-scale rearrangements.</title>
        <authorList>
            <person name="Losada L."/>
            <person name="Ronning C.M."/>
            <person name="DeShazer D."/>
            <person name="Woods D."/>
            <person name="Fedorova N."/>
            <person name="Kim H.S."/>
            <person name="Shabalina S.A."/>
            <person name="Pearson T.R."/>
            <person name="Brinkac L."/>
            <person name="Tan P."/>
            <person name="Nandi T."/>
            <person name="Crabtree J."/>
            <person name="Badger J."/>
            <person name="Beckstrom-Sternberg S."/>
            <person name="Saqib M."/>
            <person name="Schutzer S.E."/>
            <person name="Keim P."/>
            <person name="Nierman W.C."/>
        </authorList>
    </citation>
    <scope>NUCLEOTIDE SEQUENCE [LARGE SCALE GENOMIC DNA]</scope>
    <source>
        <strain>668</strain>
    </source>
</reference>
<sequence length="324" mass="35038">MSARNAASARTVACLLGPTASGKTAAALALAARRPIEIVSVDSALVYRGMDIGTAKPTRDERAAVPHHLIDIVDPADAYSAAEFRADALRLVAQIAARGRTPLLAGGTMLYYRALTQGLNDLPAADPDVRATLDADAARDGWPALHARLAGIDPATAARLAPNDSQRIQRALEVYLLTGQPMSALLAAPPRDDDAAAGLRFVPVALEPSERAVLHARIAARFDAMLEAGFIDEVERLRRRDDLHLGLPSMRCVGYRQAWEYLDGCTDYRTMRDKGIFATRQLCKRQLTWLRAMPERIVVDCCAPDATVRAVDALERVLDGRAPA</sequence>
<protein>
    <recommendedName>
        <fullName evidence="1">tRNA dimethylallyltransferase</fullName>
        <ecNumber evidence="1">2.5.1.75</ecNumber>
    </recommendedName>
    <alternativeName>
        <fullName evidence="1">Dimethylallyl diphosphate:tRNA dimethylallyltransferase</fullName>
        <shortName evidence="1">DMAPP:tRNA dimethylallyltransferase</shortName>
        <shortName evidence="1">DMATase</shortName>
    </alternativeName>
    <alternativeName>
        <fullName evidence="1">Isopentenyl-diphosphate:tRNA isopentenyltransferase</fullName>
        <shortName evidence="1">IPP transferase</shortName>
        <shortName evidence="1">IPPT</shortName>
        <shortName evidence="1">IPTase</shortName>
    </alternativeName>
</protein>
<name>MIAA_BURP6</name>
<gene>
    <name evidence="1" type="primary">miaA</name>
    <name type="ordered locus">BURPS668_3265</name>
</gene>
<accession>A3ND55</accession>
<feature type="chain" id="PRO_1000020577" description="tRNA dimethylallyltransferase">
    <location>
        <begin position="1"/>
        <end position="324"/>
    </location>
</feature>
<feature type="region of interest" description="Interaction with substrate tRNA" evidence="1">
    <location>
        <begin position="42"/>
        <end position="45"/>
    </location>
</feature>
<feature type="region of interest" description="Interaction with substrate tRNA" evidence="1">
    <location>
        <begin position="166"/>
        <end position="170"/>
    </location>
</feature>
<feature type="region of interest" description="Interaction with substrate tRNA" evidence="1">
    <location>
        <begin position="251"/>
        <end position="256"/>
    </location>
</feature>
<feature type="binding site" evidence="1">
    <location>
        <begin position="17"/>
        <end position="24"/>
    </location>
    <ligand>
        <name>ATP</name>
        <dbReference type="ChEBI" id="CHEBI:30616"/>
    </ligand>
</feature>
<feature type="binding site" evidence="1">
    <location>
        <begin position="19"/>
        <end position="24"/>
    </location>
    <ligand>
        <name>substrate</name>
    </ligand>
</feature>
<feature type="site" description="Interaction with substrate tRNA" evidence="1">
    <location>
        <position position="108"/>
    </location>
</feature>
<feature type="site" description="Interaction with substrate tRNA" evidence="1">
    <location>
        <position position="130"/>
    </location>
</feature>